<protein>
    <recommendedName>
        <fullName evidence="1">DNA-directed RNA polymerase subunit beta'</fullName>
        <shortName evidence="1">RNAP subunit beta'</shortName>
        <ecNumber evidence="1">2.7.7.6</ecNumber>
    </recommendedName>
    <alternativeName>
        <fullName evidence="1">RNA polymerase subunit beta'</fullName>
    </alternativeName>
    <alternativeName>
        <fullName evidence="1">Transcriptase subunit beta'</fullName>
    </alternativeName>
</protein>
<organism>
    <name type="scientific">Mycobacterium leprae (strain TN)</name>
    <dbReference type="NCBI Taxonomy" id="272631"/>
    <lineage>
        <taxon>Bacteria</taxon>
        <taxon>Bacillati</taxon>
        <taxon>Actinomycetota</taxon>
        <taxon>Actinomycetes</taxon>
        <taxon>Mycobacteriales</taxon>
        <taxon>Mycobacteriaceae</taxon>
        <taxon>Mycobacterium</taxon>
    </lineage>
</organism>
<accession>P30761</accession>
<proteinExistence type="inferred from homology"/>
<sequence length="1316" mass="146896">MLDVNFFDELRIGLATAEDIRQWSYGEVKKPETINYRTLKPEKDGLFCEKIFGPTRDWECYCGKYKRVRFKGIICERCGVEVTRAKVRRERMGHIELAAPVTHIWYFKGVPSRLGYLLDLAPKDLEKIIYFAAYVITTVDEEMRHNELSTLEAEMMVERKSVEDQRDADLEARAQKLEADLAALEAEGAKADARRKFRDGGEREMRQLRERAQRELDRLEDIWSTFTKLAPKQLIVDENLYRELVDRYGEYFTGAMGAESIQKLMQDFDIEAEAESLREVIRNGKGQKKLRALKRLKVVAAFQQSGNSPMGMVLDAVPVIPPELRPMVQLDGGRFATSDLNDLYRRVINRNNRLKRLIDLGAPDIIVNNEKRMLQESVDALFDNGRRGRPVTGPGNRPLKSLSDLLKGKQGRFRQNLLGKRVDYSGRSVIVVGPQLKLHQCGLPKLMALELFKPFVMKRLVDLNHAQNIKSAKRMVERQRPQVWDVLEEVIAEHPVLLNRAPTLHRLGIQAFEPMLVEGKAIQLHPLVCEAFNADFDGDQMAVHLPLSAEAQAEARILMLSSNNILSPASGRPLAMPRLDMVTGLYYLTTAVDGDTGAYRPAAEDRPESGVYSSPAEAIMAADRGVLSVRAKIKVQLTQVRPPADIEARWFGANGWRPGDPWIADTTLGRVMFNELLPLGYPFVNKQMHKKVQAAIINDLAERYPMIVVAQTVDKLKDAGFYWATRSGVTVSMADVLVPPRKKEILDHYEERADKVEKQFQRGALNHDERNEALVEIWKEATDEVGQALRDHYPVDNPIITIVDSGATGNFTQTRALAGMKGLVTNPKGEFIPRPVKSSFREGLTVLEYFINTHGARKGLADTALRTADSGYLTRRLVDVSQDVIVREHDCQTERGIVVELAVRVPDGSLIRELYIETSAYARTLGANAVDEAGNVIVARGEDLGDPEIDALLAAGITQVKVRSVLTCTTGTGVCATCYGRSMATGKLVDIGEAVGIVAAQSIGEPGTQLTMRTFHQGGVGEDITGGLPRVQELFEARVPRGKAPIADVTGRVRLEDGERFYKITIVPDDGGEEVVYDKLSKRQRLRVFKHADGSERVLSDGDYVEVGQQLMEGSADPHEVLRVQGPREVQIHLVREVQEVYRAQGVSIHDKHIEVIVRQMLRRVTIIDSGSTEFLPGSLIDRAEFESENRRVVAESGEPAAGRPVLMGITKASLATDSWLSAASFQETTRVLTDAAINCRSDKLNGLKENVIIGKLIPAGTGINRYRNIQVQPTEEARASAYTIPSYEDQYYSPDFGQATGAAVPLDDYGYSDYR</sequence>
<dbReference type="EC" id="2.7.7.6" evidence="1"/>
<dbReference type="EMBL" id="Z14314">
    <property type="protein sequence ID" value="CAA78669.1"/>
    <property type="molecule type" value="Genomic_DNA"/>
</dbReference>
<dbReference type="EMBL" id="AL583923">
    <property type="protein sequence ID" value="CAC30844.1"/>
    <property type="molecule type" value="Genomic_DNA"/>
</dbReference>
<dbReference type="PIR" id="D87145">
    <property type="entry name" value="D87145"/>
</dbReference>
<dbReference type="PIR" id="S31146">
    <property type="entry name" value="S31146"/>
</dbReference>
<dbReference type="RefSeq" id="NP_302272.1">
    <property type="nucleotide sequence ID" value="NC_002677.1"/>
</dbReference>
<dbReference type="RefSeq" id="WP_010908593.1">
    <property type="nucleotide sequence ID" value="NC_002677.1"/>
</dbReference>
<dbReference type="SMR" id="P30761"/>
<dbReference type="STRING" id="272631.gene:17575738"/>
<dbReference type="KEGG" id="mle:ML1890"/>
<dbReference type="PATRIC" id="fig|272631.5.peg.3580"/>
<dbReference type="Leproma" id="ML1890"/>
<dbReference type="eggNOG" id="COG0086">
    <property type="taxonomic scope" value="Bacteria"/>
</dbReference>
<dbReference type="HOGENOM" id="CLU_000524_3_1_11"/>
<dbReference type="OrthoDB" id="9815296at2"/>
<dbReference type="Proteomes" id="UP000000806">
    <property type="component" value="Chromosome"/>
</dbReference>
<dbReference type="GO" id="GO:0000428">
    <property type="term" value="C:DNA-directed RNA polymerase complex"/>
    <property type="evidence" value="ECO:0007669"/>
    <property type="project" value="UniProtKB-KW"/>
</dbReference>
<dbReference type="GO" id="GO:0003677">
    <property type="term" value="F:DNA binding"/>
    <property type="evidence" value="ECO:0007669"/>
    <property type="project" value="UniProtKB-UniRule"/>
</dbReference>
<dbReference type="GO" id="GO:0003899">
    <property type="term" value="F:DNA-directed RNA polymerase activity"/>
    <property type="evidence" value="ECO:0007669"/>
    <property type="project" value="UniProtKB-UniRule"/>
</dbReference>
<dbReference type="GO" id="GO:0000287">
    <property type="term" value="F:magnesium ion binding"/>
    <property type="evidence" value="ECO:0007669"/>
    <property type="project" value="UniProtKB-UniRule"/>
</dbReference>
<dbReference type="GO" id="GO:0008270">
    <property type="term" value="F:zinc ion binding"/>
    <property type="evidence" value="ECO:0007669"/>
    <property type="project" value="UniProtKB-UniRule"/>
</dbReference>
<dbReference type="GO" id="GO:0006351">
    <property type="term" value="P:DNA-templated transcription"/>
    <property type="evidence" value="ECO:0007669"/>
    <property type="project" value="UniProtKB-UniRule"/>
</dbReference>
<dbReference type="CDD" id="cd02655">
    <property type="entry name" value="RNAP_beta'_C"/>
    <property type="match status" value="1"/>
</dbReference>
<dbReference type="CDD" id="cd01609">
    <property type="entry name" value="RNAP_beta'_N"/>
    <property type="match status" value="1"/>
</dbReference>
<dbReference type="FunFam" id="1.10.132.30:FF:000003">
    <property type="entry name" value="DNA-directed RNA polymerase subunit beta"/>
    <property type="match status" value="1"/>
</dbReference>
<dbReference type="FunFam" id="1.10.150.390:FF:000002">
    <property type="entry name" value="DNA-directed RNA polymerase subunit beta"/>
    <property type="match status" value="1"/>
</dbReference>
<dbReference type="FunFam" id="1.10.40.90:FF:000001">
    <property type="entry name" value="DNA-directed RNA polymerase subunit beta"/>
    <property type="match status" value="1"/>
</dbReference>
<dbReference type="FunFam" id="4.10.860.120:FF:000001">
    <property type="entry name" value="DNA-directed RNA polymerase subunit beta"/>
    <property type="match status" value="1"/>
</dbReference>
<dbReference type="Gene3D" id="1.10.132.30">
    <property type="match status" value="1"/>
</dbReference>
<dbReference type="Gene3D" id="1.10.150.390">
    <property type="match status" value="1"/>
</dbReference>
<dbReference type="Gene3D" id="1.10.1790.20">
    <property type="match status" value="1"/>
</dbReference>
<dbReference type="Gene3D" id="1.10.40.90">
    <property type="match status" value="1"/>
</dbReference>
<dbReference type="Gene3D" id="2.40.40.20">
    <property type="match status" value="1"/>
</dbReference>
<dbReference type="Gene3D" id="2.40.50.100">
    <property type="match status" value="1"/>
</dbReference>
<dbReference type="Gene3D" id="4.10.860.120">
    <property type="entry name" value="RNA polymerase II, clamp domain"/>
    <property type="match status" value="1"/>
</dbReference>
<dbReference type="Gene3D" id="1.10.274.100">
    <property type="entry name" value="RNA polymerase Rpb1, domain 3"/>
    <property type="match status" value="1"/>
</dbReference>
<dbReference type="HAMAP" id="MF_01322">
    <property type="entry name" value="RNApol_bact_RpoC"/>
    <property type="match status" value="1"/>
</dbReference>
<dbReference type="InterPro" id="IPR045867">
    <property type="entry name" value="DNA-dir_RpoC_beta_prime"/>
</dbReference>
<dbReference type="InterPro" id="IPR012754">
    <property type="entry name" value="DNA-dir_RpoC_beta_prime_bact"/>
</dbReference>
<dbReference type="InterPro" id="IPR000722">
    <property type="entry name" value="RNA_pol_asu"/>
</dbReference>
<dbReference type="InterPro" id="IPR006592">
    <property type="entry name" value="RNA_pol_N"/>
</dbReference>
<dbReference type="InterPro" id="IPR007080">
    <property type="entry name" value="RNA_pol_Rpb1_1"/>
</dbReference>
<dbReference type="InterPro" id="IPR007066">
    <property type="entry name" value="RNA_pol_Rpb1_3"/>
</dbReference>
<dbReference type="InterPro" id="IPR042102">
    <property type="entry name" value="RNA_pol_Rpb1_3_sf"/>
</dbReference>
<dbReference type="InterPro" id="IPR007083">
    <property type="entry name" value="RNA_pol_Rpb1_4"/>
</dbReference>
<dbReference type="InterPro" id="IPR007081">
    <property type="entry name" value="RNA_pol_Rpb1_5"/>
</dbReference>
<dbReference type="InterPro" id="IPR044893">
    <property type="entry name" value="RNA_pol_Rpb1_clamp_domain"/>
</dbReference>
<dbReference type="InterPro" id="IPR038120">
    <property type="entry name" value="Rpb1_funnel_sf"/>
</dbReference>
<dbReference type="NCBIfam" id="NF011498">
    <property type="entry name" value="PRK14906.1"/>
    <property type="match status" value="1"/>
</dbReference>
<dbReference type="NCBIfam" id="TIGR02386">
    <property type="entry name" value="rpoC_TIGR"/>
    <property type="match status" value="1"/>
</dbReference>
<dbReference type="PANTHER" id="PTHR19376">
    <property type="entry name" value="DNA-DIRECTED RNA POLYMERASE"/>
    <property type="match status" value="1"/>
</dbReference>
<dbReference type="PANTHER" id="PTHR19376:SF54">
    <property type="entry name" value="DNA-DIRECTED RNA POLYMERASE SUBUNIT BETA"/>
    <property type="match status" value="1"/>
</dbReference>
<dbReference type="Pfam" id="PF04997">
    <property type="entry name" value="RNA_pol_Rpb1_1"/>
    <property type="match status" value="1"/>
</dbReference>
<dbReference type="Pfam" id="PF00623">
    <property type="entry name" value="RNA_pol_Rpb1_2"/>
    <property type="match status" value="1"/>
</dbReference>
<dbReference type="Pfam" id="PF04983">
    <property type="entry name" value="RNA_pol_Rpb1_3"/>
    <property type="match status" value="1"/>
</dbReference>
<dbReference type="Pfam" id="PF05000">
    <property type="entry name" value="RNA_pol_Rpb1_4"/>
    <property type="match status" value="1"/>
</dbReference>
<dbReference type="Pfam" id="PF04998">
    <property type="entry name" value="RNA_pol_Rpb1_5"/>
    <property type="match status" value="1"/>
</dbReference>
<dbReference type="SMART" id="SM00663">
    <property type="entry name" value="RPOLA_N"/>
    <property type="match status" value="1"/>
</dbReference>
<dbReference type="SUPFAM" id="SSF64484">
    <property type="entry name" value="beta and beta-prime subunits of DNA dependent RNA-polymerase"/>
    <property type="match status" value="1"/>
</dbReference>
<keyword id="KW-0240">DNA-directed RNA polymerase</keyword>
<keyword id="KW-0460">Magnesium</keyword>
<keyword id="KW-0479">Metal-binding</keyword>
<keyword id="KW-0548">Nucleotidyltransferase</keyword>
<keyword id="KW-1185">Reference proteome</keyword>
<keyword id="KW-0804">Transcription</keyword>
<keyword id="KW-0808">Transferase</keyword>
<keyword id="KW-0862">Zinc</keyword>
<evidence type="ECO:0000255" key="1">
    <source>
        <dbReference type="HAMAP-Rule" id="MF_01322"/>
    </source>
</evidence>
<evidence type="ECO:0000305" key="2"/>
<reference key="1">
    <citation type="journal article" date="1993" name="Mol. Microbiol.">
        <title>Nucleotide sequence of the first cosmid from the Mycobacterium leprae genome project: structure and function of the Rif-Str regions.</title>
        <authorList>
            <person name="Honore N.T."/>
            <person name="Bergh S."/>
            <person name="Chanteau S."/>
            <person name="Doucet-Populaire F."/>
            <person name="Eiglmeier K."/>
            <person name="Garnier T."/>
            <person name="Georges C."/>
            <person name="Launois P."/>
            <person name="Limpaiboon T."/>
            <person name="Newton S."/>
            <person name="Niang K."/>
            <person name="del Portillo P."/>
            <person name="Ramesh G.R."/>
            <person name="Reddi P."/>
            <person name="Ridel P.R."/>
            <person name="Sittisombut N."/>
            <person name="Wu-Hunter S."/>
            <person name="Cole S.T."/>
        </authorList>
    </citation>
    <scope>NUCLEOTIDE SEQUENCE [GENOMIC DNA]</scope>
</reference>
<reference key="2">
    <citation type="journal article" date="2001" name="Nature">
        <title>Massive gene decay in the leprosy bacillus.</title>
        <authorList>
            <person name="Cole S.T."/>
            <person name="Eiglmeier K."/>
            <person name="Parkhill J."/>
            <person name="James K.D."/>
            <person name="Thomson N.R."/>
            <person name="Wheeler P.R."/>
            <person name="Honore N."/>
            <person name="Garnier T."/>
            <person name="Churcher C.M."/>
            <person name="Harris D.E."/>
            <person name="Mungall K.L."/>
            <person name="Basham D."/>
            <person name="Brown D."/>
            <person name="Chillingworth T."/>
            <person name="Connor R."/>
            <person name="Davies R.M."/>
            <person name="Devlin K."/>
            <person name="Duthoy S."/>
            <person name="Feltwell T."/>
            <person name="Fraser A."/>
            <person name="Hamlin N."/>
            <person name="Holroyd S."/>
            <person name="Hornsby T."/>
            <person name="Jagels K."/>
            <person name="Lacroix C."/>
            <person name="Maclean J."/>
            <person name="Moule S."/>
            <person name="Murphy L.D."/>
            <person name="Oliver K."/>
            <person name="Quail M.A."/>
            <person name="Rajandream M.A."/>
            <person name="Rutherford K.M."/>
            <person name="Rutter S."/>
            <person name="Seeger K."/>
            <person name="Simon S."/>
            <person name="Simmonds M."/>
            <person name="Skelton J."/>
            <person name="Squares R."/>
            <person name="Squares S."/>
            <person name="Stevens K."/>
            <person name="Taylor K."/>
            <person name="Whitehead S."/>
            <person name="Woodward J.R."/>
            <person name="Barrell B.G."/>
        </authorList>
    </citation>
    <scope>NUCLEOTIDE SEQUENCE [LARGE SCALE GENOMIC DNA]</scope>
    <source>
        <strain>TN</strain>
    </source>
</reference>
<name>RPOC_MYCLE</name>
<feature type="chain" id="PRO_0000067760" description="DNA-directed RNA polymerase subunit beta'">
    <location>
        <begin position="1"/>
        <end position="1316"/>
    </location>
</feature>
<feature type="binding site" evidence="1">
    <location>
        <position position="60"/>
    </location>
    <ligand>
        <name>Zn(2+)</name>
        <dbReference type="ChEBI" id="CHEBI:29105"/>
        <label>1</label>
    </ligand>
</feature>
<feature type="binding site" evidence="1">
    <location>
        <position position="62"/>
    </location>
    <ligand>
        <name>Zn(2+)</name>
        <dbReference type="ChEBI" id="CHEBI:29105"/>
        <label>1</label>
    </ligand>
</feature>
<feature type="binding site" evidence="1">
    <location>
        <position position="75"/>
    </location>
    <ligand>
        <name>Zn(2+)</name>
        <dbReference type="ChEBI" id="CHEBI:29105"/>
        <label>1</label>
    </ligand>
</feature>
<feature type="binding site" evidence="1">
    <location>
        <position position="78"/>
    </location>
    <ligand>
        <name>Zn(2+)</name>
        <dbReference type="ChEBI" id="CHEBI:29105"/>
        <label>1</label>
    </ligand>
</feature>
<feature type="binding site" evidence="1">
    <location>
        <position position="535"/>
    </location>
    <ligand>
        <name>Mg(2+)</name>
        <dbReference type="ChEBI" id="CHEBI:18420"/>
    </ligand>
</feature>
<feature type="binding site" evidence="1">
    <location>
        <position position="537"/>
    </location>
    <ligand>
        <name>Mg(2+)</name>
        <dbReference type="ChEBI" id="CHEBI:18420"/>
    </ligand>
</feature>
<feature type="binding site" evidence="1">
    <location>
        <position position="539"/>
    </location>
    <ligand>
        <name>Mg(2+)</name>
        <dbReference type="ChEBI" id="CHEBI:18420"/>
    </ligand>
</feature>
<feature type="binding site" evidence="1">
    <location>
        <position position="891"/>
    </location>
    <ligand>
        <name>Zn(2+)</name>
        <dbReference type="ChEBI" id="CHEBI:29105"/>
        <label>2</label>
    </ligand>
</feature>
<feature type="binding site" evidence="1">
    <location>
        <position position="968"/>
    </location>
    <ligand>
        <name>Zn(2+)</name>
        <dbReference type="ChEBI" id="CHEBI:29105"/>
        <label>2</label>
    </ligand>
</feature>
<feature type="binding site" evidence="1">
    <location>
        <position position="975"/>
    </location>
    <ligand>
        <name>Zn(2+)</name>
        <dbReference type="ChEBI" id="CHEBI:29105"/>
        <label>2</label>
    </ligand>
</feature>
<feature type="binding site" evidence="1">
    <location>
        <position position="978"/>
    </location>
    <ligand>
        <name>Zn(2+)</name>
        <dbReference type="ChEBI" id="CHEBI:29105"/>
        <label>2</label>
    </ligand>
</feature>
<feature type="sequence conflict" description="In Ref. 1; CAA78669." evidence="2" ref="1">
    <original>A</original>
    <variation>R</variation>
    <location>
        <position position="598"/>
    </location>
</feature>
<gene>
    <name evidence="1" type="primary">rpoC</name>
    <name type="ordered locus">ML1890</name>
</gene>
<comment type="function">
    <text evidence="1">DNA-dependent RNA polymerase catalyzes the transcription of DNA into RNA using the four ribonucleoside triphosphates as substrates.</text>
</comment>
<comment type="catalytic activity">
    <reaction evidence="1">
        <text>RNA(n) + a ribonucleoside 5'-triphosphate = RNA(n+1) + diphosphate</text>
        <dbReference type="Rhea" id="RHEA:21248"/>
        <dbReference type="Rhea" id="RHEA-COMP:14527"/>
        <dbReference type="Rhea" id="RHEA-COMP:17342"/>
        <dbReference type="ChEBI" id="CHEBI:33019"/>
        <dbReference type="ChEBI" id="CHEBI:61557"/>
        <dbReference type="ChEBI" id="CHEBI:140395"/>
        <dbReference type="EC" id="2.7.7.6"/>
    </reaction>
</comment>
<comment type="cofactor">
    <cofactor evidence="1">
        <name>Mg(2+)</name>
        <dbReference type="ChEBI" id="CHEBI:18420"/>
    </cofactor>
    <text evidence="1">Binds 1 Mg(2+) ion per subunit.</text>
</comment>
<comment type="cofactor">
    <cofactor evidence="1">
        <name>Zn(2+)</name>
        <dbReference type="ChEBI" id="CHEBI:29105"/>
    </cofactor>
    <text evidence="1">Binds 2 Zn(2+) ions per subunit.</text>
</comment>
<comment type="subunit">
    <text evidence="1">The RNAP catalytic core consists of 2 alpha, 1 beta, 1 beta' and 1 omega subunit. When a sigma factor is associated with the core the holoenzyme is formed, which can initiate transcription.</text>
</comment>
<comment type="similarity">
    <text evidence="1">Belongs to the RNA polymerase beta' chain family.</text>
</comment>